<feature type="chain" id="PRO_1000187727" description="Demethylmenaquinone methyltransferase">
    <location>
        <begin position="1"/>
        <end position="237"/>
    </location>
</feature>
<feature type="binding site" evidence="1">
    <location>
        <position position="58"/>
    </location>
    <ligand>
        <name>S-adenosyl-L-methionine</name>
        <dbReference type="ChEBI" id="CHEBI:59789"/>
    </ligand>
</feature>
<feature type="binding site" evidence="1">
    <location>
        <position position="79"/>
    </location>
    <ligand>
        <name>S-adenosyl-L-methionine</name>
        <dbReference type="ChEBI" id="CHEBI:59789"/>
    </ligand>
</feature>
<feature type="binding site" evidence="1">
    <location>
        <begin position="106"/>
        <end position="107"/>
    </location>
    <ligand>
        <name>S-adenosyl-L-methionine</name>
        <dbReference type="ChEBI" id="CHEBI:59789"/>
    </ligand>
</feature>
<gene>
    <name evidence="1" type="primary">menG</name>
    <name type="ordered locus">BCAH820_1607</name>
</gene>
<protein>
    <recommendedName>
        <fullName evidence="1">Demethylmenaquinone methyltransferase</fullName>
        <ecNumber evidence="1">2.1.1.163</ecNumber>
    </recommendedName>
</protein>
<comment type="function">
    <text evidence="1">Methyltransferase required for the conversion of demethylmenaquinol (DMKH2) to menaquinol (MKH2).</text>
</comment>
<comment type="catalytic activity">
    <reaction evidence="1">
        <text>a 2-demethylmenaquinol + S-adenosyl-L-methionine = a menaquinol + S-adenosyl-L-homocysteine + H(+)</text>
        <dbReference type="Rhea" id="RHEA:42640"/>
        <dbReference type="Rhea" id="RHEA-COMP:9539"/>
        <dbReference type="Rhea" id="RHEA-COMP:9563"/>
        <dbReference type="ChEBI" id="CHEBI:15378"/>
        <dbReference type="ChEBI" id="CHEBI:18151"/>
        <dbReference type="ChEBI" id="CHEBI:55437"/>
        <dbReference type="ChEBI" id="CHEBI:57856"/>
        <dbReference type="ChEBI" id="CHEBI:59789"/>
        <dbReference type="EC" id="2.1.1.163"/>
    </reaction>
</comment>
<comment type="pathway">
    <text evidence="1">Quinol/quinone metabolism; menaquinone biosynthesis; menaquinol from 1,4-dihydroxy-2-naphthoate: step 2/2.</text>
</comment>
<comment type="similarity">
    <text evidence="1">Belongs to the class I-like SAM-binding methyltransferase superfamily. MenG/UbiE family.</text>
</comment>
<evidence type="ECO:0000255" key="1">
    <source>
        <dbReference type="HAMAP-Rule" id="MF_01813"/>
    </source>
</evidence>
<organism>
    <name type="scientific">Bacillus cereus (strain AH820)</name>
    <dbReference type="NCBI Taxonomy" id="405535"/>
    <lineage>
        <taxon>Bacteria</taxon>
        <taxon>Bacillati</taxon>
        <taxon>Bacillota</taxon>
        <taxon>Bacilli</taxon>
        <taxon>Bacillales</taxon>
        <taxon>Bacillaceae</taxon>
        <taxon>Bacillus</taxon>
        <taxon>Bacillus cereus group</taxon>
    </lineage>
</organism>
<name>MENG_BACC0</name>
<keyword id="KW-0474">Menaquinone biosynthesis</keyword>
<keyword id="KW-0489">Methyltransferase</keyword>
<keyword id="KW-0949">S-adenosyl-L-methionine</keyword>
<keyword id="KW-0808">Transferase</keyword>
<sequence>MQQSKEERVHDVFEKISDKYDVMNSVISFQRHKAWRKETMRIMDVKPGSKALDVCCGTADWTIALAGAVGEQGKVVGLDFSENMLSVGKQKVEALQLKQVELLHGNAMELPFEDNTFDYVTIGFGLRNVPDYMHVLKEMTRVVKPGGKVICLETSQPTMIGFRQGYILYFKYIMPLFGKLFAKSYKEYSWLQESASTFPGMKELANMFEKAGLERVQVKPFTFGVAAMHLGMKPESK</sequence>
<reference key="1">
    <citation type="submission" date="2008-10" db="EMBL/GenBank/DDBJ databases">
        <title>Genome sequence of Bacillus cereus AH820.</title>
        <authorList>
            <person name="Dodson R.J."/>
            <person name="Durkin A.S."/>
            <person name="Rosovitz M.J."/>
            <person name="Rasko D.A."/>
            <person name="Hoffmaster A."/>
            <person name="Ravel J."/>
            <person name="Sutton G."/>
        </authorList>
    </citation>
    <scope>NUCLEOTIDE SEQUENCE [LARGE SCALE GENOMIC DNA]</scope>
    <source>
        <strain>AH820</strain>
    </source>
</reference>
<dbReference type="EC" id="2.1.1.163" evidence="1"/>
<dbReference type="EMBL" id="CP001283">
    <property type="protein sequence ID" value="ACK90309.1"/>
    <property type="molecule type" value="Genomic_DNA"/>
</dbReference>
<dbReference type="RefSeq" id="WP_001187667.1">
    <property type="nucleotide sequence ID" value="NC_011773.1"/>
</dbReference>
<dbReference type="SMR" id="B7JGZ8"/>
<dbReference type="GeneID" id="75084824"/>
<dbReference type="KEGG" id="bcu:BCAH820_1607"/>
<dbReference type="HOGENOM" id="CLU_037990_0_0_9"/>
<dbReference type="UniPathway" id="UPA00079">
    <property type="reaction ID" value="UER00169"/>
</dbReference>
<dbReference type="Proteomes" id="UP000001363">
    <property type="component" value="Chromosome"/>
</dbReference>
<dbReference type="GO" id="GO:0043770">
    <property type="term" value="F:demethylmenaquinone methyltransferase activity"/>
    <property type="evidence" value="ECO:0007669"/>
    <property type="project" value="UniProtKB-UniRule"/>
</dbReference>
<dbReference type="GO" id="GO:0009234">
    <property type="term" value="P:menaquinone biosynthetic process"/>
    <property type="evidence" value="ECO:0007669"/>
    <property type="project" value="UniProtKB-UniRule"/>
</dbReference>
<dbReference type="GO" id="GO:0032259">
    <property type="term" value="P:methylation"/>
    <property type="evidence" value="ECO:0007669"/>
    <property type="project" value="UniProtKB-KW"/>
</dbReference>
<dbReference type="CDD" id="cd02440">
    <property type="entry name" value="AdoMet_MTases"/>
    <property type="match status" value="1"/>
</dbReference>
<dbReference type="FunFam" id="3.40.50.150:FF:000086">
    <property type="entry name" value="Demethylmenaquinone methyltransferase"/>
    <property type="match status" value="1"/>
</dbReference>
<dbReference type="Gene3D" id="3.40.50.150">
    <property type="entry name" value="Vaccinia Virus protein VP39"/>
    <property type="match status" value="1"/>
</dbReference>
<dbReference type="HAMAP" id="MF_01813">
    <property type="entry name" value="MenG_UbiE_methyltr"/>
    <property type="match status" value="1"/>
</dbReference>
<dbReference type="InterPro" id="IPR014122">
    <property type="entry name" value="MenG_heptapren"/>
</dbReference>
<dbReference type="InterPro" id="IPR029063">
    <property type="entry name" value="SAM-dependent_MTases_sf"/>
</dbReference>
<dbReference type="InterPro" id="IPR004033">
    <property type="entry name" value="UbiE/COQ5_MeTrFase"/>
</dbReference>
<dbReference type="InterPro" id="IPR023576">
    <property type="entry name" value="UbiE/COQ5_MeTrFase_CS"/>
</dbReference>
<dbReference type="NCBIfam" id="TIGR02752">
    <property type="entry name" value="MenG_heptapren"/>
    <property type="match status" value="1"/>
</dbReference>
<dbReference type="NCBIfam" id="TIGR01934">
    <property type="entry name" value="MenG_MenH_UbiE"/>
    <property type="match status" value="1"/>
</dbReference>
<dbReference type="NCBIfam" id="NF001243">
    <property type="entry name" value="PRK00216.1-4"/>
    <property type="match status" value="1"/>
</dbReference>
<dbReference type="NCBIfam" id="NF001244">
    <property type="entry name" value="PRK00216.1-5"/>
    <property type="match status" value="1"/>
</dbReference>
<dbReference type="PANTHER" id="PTHR43591:SF24">
    <property type="entry name" value="2-METHOXY-6-POLYPRENYL-1,4-BENZOQUINOL METHYLASE, MITOCHONDRIAL"/>
    <property type="match status" value="1"/>
</dbReference>
<dbReference type="PANTHER" id="PTHR43591">
    <property type="entry name" value="METHYLTRANSFERASE"/>
    <property type="match status" value="1"/>
</dbReference>
<dbReference type="Pfam" id="PF01209">
    <property type="entry name" value="Ubie_methyltran"/>
    <property type="match status" value="1"/>
</dbReference>
<dbReference type="SUPFAM" id="SSF53335">
    <property type="entry name" value="S-adenosyl-L-methionine-dependent methyltransferases"/>
    <property type="match status" value="1"/>
</dbReference>
<dbReference type="PROSITE" id="PS51608">
    <property type="entry name" value="SAM_MT_UBIE"/>
    <property type="match status" value="1"/>
</dbReference>
<dbReference type="PROSITE" id="PS01183">
    <property type="entry name" value="UBIE_1"/>
    <property type="match status" value="1"/>
</dbReference>
<dbReference type="PROSITE" id="PS01184">
    <property type="entry name" value="UBIE_2"/>
    <property type="match status" value="1"/>
</dbReference>
<accession>B7JGZ8</accession>
<proteinExistence type="inferred from homology"/>